<evidence type="ECO:0000250" key="1"/>
<evidence type="ECO:0000250" key="2">
    <source>
        <dbReference type="UniProtKB" id="Q9QXN4"/>
    </source>
</evidence>
<evidence type="ECO:0000256" key="3">
    <source>
        <dbReference type="SAM" id="MobiDB-lite"/>
    </source>
</evidence>
<evidence type="ECO:0000305" key="4"/>
<name>MIOX_PIG</name>
<gene>
    <name type="primary">MIOX</name>
    <name type="synonym">ALDRL6</name>
</gene>
<keyword id="KW-0963">Cytoplasm</keyword>
<keyword id="KW-0408">Iron</keyword>
<keyword id="KW-0479">Metal-binding</keyword>
<keyword id="KW-0560">Oxidoreductase</keyword>
<keyword id="KW-0597">Phosphoprotein</keyword>
<keyword id="KW-1185">Reference proteome</keyword>
<protein>
    <recommendedName>
        <fullName>Inositol oxygenase</fullName>
        <ecNumber>1.13.99.1</ecNumber>
    </recommendedName>
    <alternativeName>
        <fullName>Aldehyde reductase-like 6</fullName>
    </alternativeName>
    <alternativeName>
        <fullName>Myo-inositol oxygenase</fullName>
        <shortName>MI oxygenase</shortName>
    </alternativeName>
</protein>
<comment type="catalytic activity">
    <reaction>
        <text>myo-inositol + O2 = D-glucuronate + H2O + H(+)</text>
        <dbReference type="Rhea" id="RHEA:23696"/>
        <dbReference type="ChEBI" id="CHEBI:15377"/>
        <dbReference type="ChEBI" id="CHEBI:15378"/>
        <dbReference type="ChEBI" id="CHEBI:15379"/>
        <dbReference type="ChEBI" id="CHEBI:17268"/>
        <dbReference type="ChEBI" id="CHEBI:58720"/>
        <dbReference type="EC" id="1.13.99.1"/>
    </reaction>
</comment>
<comment type="cofactor">
    <cofactor evidence="1">
        <name>Fe cation</name>
        <dbReference type="ChEBI" id="CHEBI:24875"/>
    </cofactor>
    <text evidence="1">Binds 2 iron ions per subunit.</text>
</comment>
<comment type="biophysicochemical properties">
    <temperatureDependence>
        <text>Thermolabile.</text>
    </temperatureDependence>
</comment>
<comment type="pathway">
    <text>Polyol metabolism; myo-inositol degradation into D-glucuronate; D-glucuronate from myo-inositol: step 1/1.</text>
</comment>
<comment type="subcellular location">
    <subcellularLocation>
        <location>Cytoplasm</location>
    </subcellularLocation>
</comment>
<comment type="tissue specificity">
    <text>Kidney specific.</text>
</comment>
<comment type="PTM">
    <text>The N-terminus is blocked.</text>
</comment>
<comment type="similarity">
    <text evidence="4">Belongs to the myo-inositol oxygenase family.</text>
</comment>
<sequence length="282" mass="32653">MKDPDPSQVYRPDMDPEAAKDKGSFRNYTSGPLLDRVFRTYKLMHTWQTVDFVRKKHAQFGGFSYKRMTVLEAVDMLDGLVDESDPDVDFPNSFHAFQTAEGIRKAHPDKDWFHLVGLLHDLGKVLVLAGEPQWAVVGDTFPVGCRPQASVVFCDSTFQDNPDLQDPVYSTELGMYQPHCGLENALMSWGHDEYMYQMMKFNKFSLPGEAFYIIRFHSFYPWHTGGDYRQLCNEQDLAMLPWVQEFNKFDLYTKGSDMPDVDELRPYYQGLIDKYCPGVLCW</sequence>
<reference key="1">
    <citation type="journal article" date="2001" name="Biochem. J.">
        <title>Myo-inositol oxygenase: molecular cloning and expression of a unique enzyme that oxidizes myo-inositol and d-chiro-inositol.</title>
        <authorList>
            <person name="Arner R.J."/>
            <person name="Prabhu K.S."/>
            <person name="Thompson J.T."/>
            <person name="Hildenbrandt G.R."/>
            <person name="Liken A.D."/>
            <person name="Reddy C.C."/>
        </authorList>
    </citation>
    <scope>NUCLEOTIDE SEQUENCE [MRNA]</scope>
    <scope>CHARACTERIZATION</scope>
    <source>
        <tissue>Kidney</tissue>
    </source>
</reference>
<proteinExistence type="evidence at protein level"/>
<organism>
    <name type="scientific">Sus scrofa</name>
    <name type="common">Pig</name>
    <dbReference type="NCBI Taxonomy" id="9823"/>
    <lineage>
        <taxon>Eukaryota</taxon>
        <taxon>Metazoa</taxon>
        <taxon>Chordata</taxon>
        <taxon>Craniata</taxon>
        <taxon>Vertebrata</taxon>
        <taxon>Euteleostomi</taxon>
        <taxon>Mammalia</taxon>
        <taxon>Eutheria</taxon>
        <taxon>Laurasiatheria</taxon>
        <taxon>Artiodactyla</taxon>
        <taxon>Suina</taxon>
        <taxon>Suidae</taxon>
        <taxon>Sus</taxon>
    </lineage>
</organism>
<dbReference type="EC" id="1.13.99.1"/>
<dbReference type="EMBL" id="AF401311">
    <property type="protein sequence ID" value="AAL39076.1"/>
    <property type="molecule type" value="mRNA"/>
</dbReference>
<dbReference type="RefSeq" id="NP_999267.1">
    <property type="nucleotide sequence ID" value="NM_214102.2"/>
</dbReference>
<dbReference type="SMR" id="Q8WN98"/>
<dbReference type="FunCoup" id="Q8WN98">
    <property type="interactions" value="139"/>
</dbReference>
<dbReference type="STRING" id="9823.ENSSSCP00000064905"/>
<dbReference type="PaxDb" id="9823-ENSSSCP00000001029"/>
<dbReference type="PeptideAtlas" id="Q8WN98"/>
<dbReference type="GeneID" id="397189"/>
<dbReference type="KEGG" id="ssc:397189"/>
<dbReference type="CTD" id="55586"/>
<dbReference type="eggNOG" id="KOG1573">
    <property type="taxonomic scope" value="Eukaryota"/>
</dbReference>
<dbReference type="InParanoid" id="Q8WN98"/>
<dbReference type="OrthoDB" id="5151075at2759"/>
<dbReference type="BRENDA" id="1.13.99.1">
    <property type="organism ID" value="6170"/>
</dbReference>
<dbReference type="SABIO-RK" id="Q8WN98"/>
<dbReference type="UniPathway" id="UPA00111">
    <property type="reaction ID" value="UER00527"/>
</dbReference>
<dbReference type="Proteomes" id="UP000008227">
    <property type="component" value="Unplaced"/>
</dbReference>
<dbReference type="Proteomes" id="UP000314985">
    <property type="component" value="Unplaced"/>
</dbReference>
<dbReference type="Proteomes" id="UP000694570">
    <property type="component" value="Unplaced"/>
</dbReference>
<dbReference type="Proteomes" id="UP000694571">
    <property type="component" value="Unplaced"/>
</dbReference>
<dbReference type="Proteomes" id="UP000694720">
    <property type="component" value="Unplaced"/>
</dbReference>
<dbReference type="Proteomes" id="UP000694722">
    <property type="component" value="Unplaced"/>
</dbReference>
<dbReference type="Proteomes" id="UP000694723">
    <property type="component" value="Unplaced"/>
</dbReference>
<dbReference type="Proteomes" id="UP000694724">
    <property type="component" value="Unplaced"/>
</dbReference>
<dbReference type="Proteomes" id="UP000694725">
    <property type="component" value="Unplaced"/>
</dbReference>
<dbReference type="Proteomes" id="UP000694726">
    <property type="component" value="Unplaced"/>
</dbReference>
<dbReference type="Proteomes" id="UP000694727">
    <property type="component" value="Unplaced"/>
</dbReference>
<dbReference type="Proteomes" id="UP000694728">
    <property type="component" value="Unplaced"/>
</dbReference>
<dbReference type="GO" id="GO:0005737">
    <property type="term" value="C:cytoplasm"/>
    <property type="evidence" value="ECO:0007669"/>
    <property type="project" value="UniProtKB-SubCell"/>
</dbReference>
<dbReference type="GO" id="GO:0016234">
    <property type="term" value="C:inclusion body"/>
    <property type="evidence" value="ECO:0000314"/>
    <property type="project" value="UniProtKB"/>
</dbReference>
<dbReference type="GO" id="GO:0008199">
    <property type="term" value="F:ferric iron binding"/>
    <property type="evidence" value="ECO:0000250"/>
    <property type="project" value="UniProtKB"/>
</dbReference>
<dbReference type="GO" id="GO:0050113">
    <property type="term" value="F:inositol oxygenase activity"/>
    <property type="evidence" value="ECO:0000314"/>
    <property type="project" value="UniProtKB"/>
</dbReference>
<dbReference type="GO" id="GO:0019310">
    <property type="term" value="P:inositol catabolic process"/>
    <property type="evidence" value="ECO:0000314"/>
    <property type="project" value="UniProtKB"/>
</dbReference>
<dbReference type="GO" id="GO:0003014">
    <property type="term" value="P:renal system process"/>
    <property type="evidence" value="ECO:0000304"/>
    <property type="project" value="UniProtKB"/>
</dbReference>
<dbReference type="InterPro" id="IPR007828">
    <property type="entry name" value="Inositol_oxygenase"/>
</dbReference>
<dbReference type="PANTHER" id="PTHR12588:SF0">
    <property type="entry name" value="INOSITOL OXYGENASE"/>
    <property type="match status" value="1"/>
</dbReference>
<dbReference type="PANTHER" id="PTHR12588">
    <property type="entry name" value="MYOINOSITOL OXYGENASE"/>
    <property type="match status" value="1"/>
</dbReference>
<dbReference type="Pfam" id="PF05153">
    <property type="entry name" value="MIOX"/>
    <property type="match status" value="1"/>
</dbReference>
<dbReference type="SUPFAM" id="SSF109604">
    <property type="entry name" value="HD-domain/PDEase-like"/>
    <property type="match status" value="1"/>
</dbReference>
<accession>Q8WN98</accession>
<feature type="chain" id="PRO_0000079150" description="Inositol oxygenase">
    <location>
        <begin position="1"/>
        <end position="282"/>
    </location>
</feature>
<feature type="region of interest" description="Disordered" evidence="3">
    <location>
        <begin position="1"/>
        <end position="25"/>
    </location>
</feature>
<feature type="compositionally biased region" description="Basic and acidic residues" evidence="3">
    <location>
        <begin position="12"/>
        <end position="24"/>
    </location>
</feature>
<feature type="binding site" evidence="1">
    <location>
        <position position="26"/>
    </location>
    <ligand>
        <name>substrate</name>
    </ligand>
</feature>
<feature type="binding site" evidence="1">
    <location>
        <begin position="82"/>
        <end position="84"/>
    </location>
    <ligand>
        <name>substrate</name>
    </ligand>
</feature>
<feature type="binding site" evidence="1">
    <location>
        <position position="95"/>
    </location>
    <ligand>
        <name>Fe cation</name>
        <dbReference type="ChEBI" id="CHEBI:24875"/>
        <label>1</label>
    </ligand>
</feature>
<feature type="binding site" evidence="1">
    <location>
        <position position="120"/>
    </location>
    <ligand>
        <name>Fe cation</name>
        <dbReference type="ChEBI" id="CHEBI:24875"/>
        <label>1</label>
    </ligand>
</feature>
<feature type="binding site" evidence="1">
    <location>
        <position position="121"/>
    </location>
    <ligand>
        <name>Fe cation</name>
        <dbReference type="ChEBI" id="CHEBI:24875"/>
        <label>1</label>
    </ligand>
</feature>
<feature type="binding site" evidence="1">
    <location>
        <position position="121"/>
    </location>
    <ligand>
        <name>Fe cation</name>
        <dbReference type="ChEBI" id="CHEBI:24875"/>
        <label>2</label>
    </ligand>
</feature>
<feature type="binding site" evidence="1">
    <location>
        <position position="124"/>
    </location>
    <ligand>
        <name>substrate</name>
    </ligand>
</feature>
<feature type="binding site" evidence="1">
    <location>
        <begin position="138"/>
        <end position="139"/>
    </location>
    <ligand>
        <name>substrate</name>
    </ligand>
</feature>
<feature type="binding site" evidence="1">
    <location>
        <position position="191"/>
    </location>
    <ligand>
        <name>Fe cation</name>
        <dbReference type="ChEBI" id="CHEBI:24875"/>
        <label>2</label>
    </ligand>
</feature>
<feature type="binding site" evidence="1">
    <location>
        <begin position="217"/>
        <end position="218"/>
    </location>
    <ligand>
        <name>substrate</name>
    </ligand>
</feature>
<feature type="binding site" evidence="1">
    <location>
        <position position="217"/>
    </location>
    <ligand>
        <name>Fe cation</name>
        <dbReference type="ChEBI" id="CHEBI:24875"/>
        <label>2</label>
    </ligand>
</feature>
<feature type="binding site" evidence="1">
    <location>
        <position position="250"/>
    </location>
    <ligand>
        <name>Fe cation</name>
        <dbReference type="ChEBI" id="CHEBI:24875"/>
        <label>1</label>
    </ligand>
</feature>
<feature type="modified residue" description="Phosphoserine" evidence="2">
    <location>
        <position position="30"/>
    </location>
</feature>